<accession>P0DL17</accession>
<protein>
    <recommendedName>
        <fullName>Cysteine-rich venom protein hematin</fullName>
        <shortName>CRVP</shortName>
    </recommendedName>
</protein>
<reference key="1">
    <citation type="journal article" date="2009" name="J. Biochem.">
        <title>Structural divergence of cysteine-rich secretory proteins in snake venoms.</title>
        <authorList>
            <person name="Matsunaga Y."/>
            <person name="Yamazaki Y."/>
            <person name="Hyodo F."/>
            <person name="Sugiyama Y."/>
            <person name="Nozaki M."/>
            <person name="Morita T."/>
        </authorList>
    </citation>
    <scope>PROTEIN SEQUENCE</scope>
    <source>
        <tissue>Venom</tissue>
    </source>
</reference>
<evidence type="ECO:0000250" key="1"/>
<evidence type="ECO:0000305" key="2"/>
<organism>
    <name type="scientific">Hemachatus haemachatus</name>
    <name type="common">Rinkhals</name>
    <name type="synonym">Sepedon haemachatus</name>
    <dbReference type="NCBI Taxonomy" id="8626"/>
    <lineage>
        <taxon>Eukaryota</taxon>
        <taxon>Metazoa</taxon>
        <taxon>Chordata</taxon>
        <taxon>Craniata</taxon>
        <taxon>Vertebrata</taxon>
        <taxon>Euteleostomi</taxon>
        <taxon>Lepidosauria</taxon>
        <taxon>Squamata</taxon>
        <taxon>Bifurcata</taxon>
        <taxon>Unidentata</taxon>
        <taxon>Episquamata</taxon>
        <taxon>Toxicofera</taxon>
        <taxon>Serpentes</taxon>
        <taxon>Colubroidea</taxon>
        <taxon>Elapidae</taxon>
        <taxon>Elapinae</taxon>
        <taxon>Hemachatus</taxon>
    </lineage>
</organism>
<feature type="chain" id="PRO_0000422147" description="Cysteine-rich venom protein hematin">
    <location>
        <begin position="1"/>
        <end position="30" status="greater than"/>
    </location>
</feature>
<feature type="non-terminal residue">
    <location>
        <position position="30"/>
    </location>
</feature>
<proteinExistence type="evidence at protein level"/>
<name>CRVP_HEMHA</name>
<comment type="function">
    <text evidence="1">Inhibits calcium-activated potassium channels (KCa), voltage-gated potassium channel (Kv), and the calcium release channel/ryanodine receptor (RyR).</text>
</comment>
<comment type="subcellular location">
    <subcellularLocation>
        <location>Secreted</location>
    </subcellularLocation>
</comment>
<comment type="tissue specificity">
    <text>Expressed by the venom gland.</text>
</comment>
<comment type="PTM">
    <text evidence="1">Contains 8 disulfide bonds.</text>
</comment>
<comment type="similarity">
    <text evidence="2">Belongs to the CRISP family.</text>
</comment>
<keyword id="KW-0108">Calcium channel impairing toxin</keyword>
<keyword id="KW-1221">Calcium-activated potassium channel impairing toxin</keyword>
<keyword id="KW-0903">Direct protein sequencing</keyword>
<keyword id="KW-1015">Disulfide bond</keyword>
<keyword id="KW-0872">Ion channel impairing toxin</keyword>
<keyword id="KW-0632">Potassium channel impairing toxin</keyword>
<keyword id="KW-1219">Ryanodine-sensitive calcium-release channel impairing toxin</keyword>
<keyword id="KW-0964">Secreted</keyword>
<keyword id="KW-0800">Toxin</keyword>
<keyword id="KW-1220">Voltage-gated potassium channel impairing toxin</keyword>
<dbReference type="GO" id="GO:0005576">
    <property type="term" value="C:extracellular region"/>
    <property type="evidence" value="ECO:0007669"/>
    <property type="project" value="UniProtKB-SubCell"/>
</dbReference>
<dbReference type="GO" id="GO:0005246">
    <property type="term" value="F:calcium channel regulator activity"/>
    <property type="evidence" value="ECO:0007669"/>
    <property type="project" value="UniProtKB-KW"/>
</dbReference>
<dbReference type="GO" id="GO:0015459">
    <property type="term" value="F:potassium channel regulator activity"/>
    <property type="evidence" value="ECO:0007669"/>
    <property type="project" value="UniProtKB-KW"/>
</dbReference>
<dbReference type="GO" id="GO:0090729">
    <property type="term" value="F:toxin activity"/>
    <property type="evidence" value="ECO:0007669"/>
    <property type="project" value="UniProtKB-KW"/>
</dbReference>
<sequence>SVDFNSESTRREEKQKEIVDLHNXLRDXVX</sequence>